<reference key="1">
    <citation type="journal article" date="2007" name="Am. Fern J.">
        <title>The complete plastid genome sequence of Angiopteris evecta (G. Forst.) Hoffm. (Marattiaceae).</title>
        <authorList>
            <person name="Roper J.M."/>
            <person name="Hansen S.K."/>
            <person name="Wolf P.G."/>
            <person name="Karol K.G."/>
            <person name="Mandoli D.F."/>
            <person name="Everett K.D.E."/>
            <person name="Kuehl J.V."/>
            <person name="Boore J.L."/>
        </authorList>
    </citation>
    <scope>NUCLEOTIDE SEQUENCE [LARGE SCALE GENOMIC DNA]</scope>
</reference>
<accession>A2T387</accession>
<feature type="chain" id="PRO_0000298567" description="NAD(P)H-quinone oxidoreductase subunit I, chloroplastic">
    <location>
        <begin position="1"/>
        <end position="181"/>
    </location>
</feature>
<feature type="domain" description="4Fe-4S ferredoxin-type 1" evidence="1">
    <location>
        <begin position="55"/>
        <end position="84"/>
    </location>
</feature>
<feature type="domain" description="4Fe-4S ferredoxin-type 2" evidence="1">
    <location>
        <begin position="95"/>
        <end position="124"/>
    </location>
</feature>
<feature type="binding site" evidence="1">
    <location>
        <position position="64"/>
    </location>
    <ligand>
        <name>[4Fe-4S] cluster</name>
        <dbReference type="ChEBI" id="CHEBI:49883"/>
        <label>1</label>
    </ligand>
</feature>
<feature type="binding site" evidence="1">
    <location>
        <position position="67"/>
    </location>
    <ligand>
        <name>[4Fe-4S] cluster</name>
        <dbReference type="ChEBI" id="CHEBI:49883"/>
        <label>1</label>
    </ligand>
</feature>
<feature type="binding site" evidence="1">
    <location>
        <position position="70"/>
    </location>
    <ligand>
        <name>[4Fe-4S] cluster</name>
        <dbReference type="ChEBI" id="CHEBI:49883"/>
        <label>1</label>
    </ligand>
</feature>
<feature type="binding site" evidence="1">
    <location>
        <position position="74"/>
    </location>
    <ligand>
        <name>[4Fe-4S] cluster</name>
        <dbReference type="ChEBI" id="CHEBI:49883"/>
        <label>2</label>
    </ligand>
</feature>
<feature type="binding site" evidence="1">
    <location>
        <position position="104"/>
    </location>
    <ligand>
        <name>[4Fe-4S] cluster</name>
        <dbReference type="ChEBI" id="CHEBI:49883"/>
        <label>2</label>
    </ligand>
</feature>
<feature type="binding site" evidence="1">
    <location>
        <position position="107"/>
    </location>
    <ligand>
        <name>[4Fe-4S] cluster</name>
        <dbReference type="ChEBI" id="CHEBI:49883"/>
        <label>2</label>
    </ligand>
</feature>
<feature type="binding site" evidence="1">
    <location>
        <position position="110"/>
    </location>
    <ligand>
        <name>[4Fe-4S] cluster</name>
        <dbReference type="ChEBI" id="CHEBI:49883"/>
        <label>2</label>
    </ligand>
</feature>
<feature type="binding site" evidence="1">
    <location>
        <position position="114"/>
    </location>
    <ligand>
        <name>[4Fe-4S] cluster</name>
        <dbReference type="ChEBI" id="CHEBI:49883"/>
        <label>1</label>
    </ligand>
</feature>
<protein>
    <recommendedName>
        <fullName evidence="1">NAD(P)H-quinone oxidoreductase subunit I, chloroplastic</fullName>
        <ecNumber evidence="1">7.1.1.-</ecNumber>
    </recommendedName>
    <alternativeName>
        <fullName evidence="1">NAD(P)H dehydrogenase subunit I</fullName>
        <shortName evidence="1">NDH subunit I</shortName>
    </alternativeName>
    <alternativeName>
        <fullName evidence="1">NADH-plastoquinone oxidoreductase subunit I</fullName>
    </alternativeName>
</protein>
<dbReference type="EC" id="7.1.1.-" evidence="1"/>
<dbReference type="EMBL" id="DQ821119">
    <property type="protein sequence ID" value="ABG79654.1"/>
    <property type="molecule type" value="Genomic_DNA"/>
</dbReference>
<dbReference type="RefSeq" id="YP_001023755.1">
    <property type="nucleotide sequence ID" value="NC_008829.1"/>
</dbReference>
<dbReference type="SMR" id="A2T387"/>
<dbReference type="GeneID" id="4788188"/>
<dbReference type="GO" id="GO:0009535">
    <property type="term" value="C:chloroplast thylakoid membrane"/>
    <property type="evidence" value="ECO:0007669"/>
    <property type="project" value="UniProtKB-SubCell"/>
</dbReference>
<dbReference type="GO" id="GO:0051539">
    <property type="term" value="F:4 iron, 4 sulfur cluster binding"/>
    <property type="evidence" value="ECO:0007669"/>
    <property type="project" value="UniProtKB-KW"/>
</dbReference>
<dbReference type="GO" id="GO:0005506">
    <property type="term" value="F:iron ion binding"/>
    <property type="evidence" value="ECO:0007669"/>
    <property type="project" value="UniProtKB-UniRule"/>
</dbReference>
<dbReference type="GO" id="GO:0008137">
    <property type="term" value="F:NADH dehydrogenase (ubiquinone) activity"/>
    <property type="evidence" value="ECO:0007669"/>
    <property type="project" value="InterPro"/>
</dbReference>
<dbReference type="GO" id="GO:0048038">
    <property type="term" value="F:quinone binding"/>
    <property type="evidence" value="ECO:0007669"/>
    <property type="project" value="UniProtKB-KW"/>
</dbReference>
<dbReference type="GO" id="GO:0019684">
    <property type="term" value="P:photosynthesis, light reaction"/>
    <property type="evidence" value="ECO:0007669"/>
    <property type="project" value="UniProtKB-UniRule"/>
</dbReference>
<dbReference type="Gene3D" id="3.30.70.3270">
    <property type="match status" value="1"/>
</dbReference>
<dbReference type="HAMAP" id="MF_01351">
    <property type="entry name" value="NDH1_NuoI"/>
    <property type="match status" value="1"/>
</dbReference>
<dbReference type="InterPro" id="IPR017896">
    <property type="entry name" value="4Fe4S_Fe-S-bd"/>
</dbReference>
<dbReference type="InterPro" id="IPR017900">
    <property type="entry name" value="4Fe4S_Fe_S_CS"/>
</dbReference>
<dbReference type="InterPro" id="IPR010226">
    <property type="entry name" value="NADH_quinone_OxRdtase_chainI"/>
</dbReference>
<dbReference type="InterPro" id="IPR004497">
    <property type="entry name" value="NDHI"/>
</dbReference>
<dbReference type="NCBIfam" id="TIGR00403">
    <property type="entry name" value="ndhI"/>
    <property type="match status" value="1"/>
</dbReference>
<dbReference type="NCBIfam" id="TIGR01971">
    <property type="entry name" value="NuoI"/>
    <property type="match status" value="1"/>
</dbReference>
<dbReference type="NCBIfam" id="NF004537">
    <property type="entry name" value="PRK05888.1-3"/>
    <property type="match status" value="1"/>
</dbReference>
<dbReference type="PANTHER" id="PTHR47275">
    <property type="entry name" value="NAD(P)H-QUINONE OXIDOREDUCTASE SUBUNIT I, CHLOROPLASTIC"/>
    <property type="match status" value="1"/>
</dbReference>
<dbReference type="PANTHER" id="PTHR47275:SF1">
    <property type="entry name" value="NAD(P)H-QUINONE OXIDOREDUCTASE SUBUNIT I, CHLOROPLASTIC"/>
    <property type="match status" value="1"/>
</dbReference>
<dbReference type="Pfam" id="PF12838">
    <property type="entry name" value="Fer4_7"/>
    <property type="match status" value="1"/>
</dbReference>
<dbReference type="SUPFAM" id="SSF54862">
    <property type="entry name" value="4Fe-4S ferredoxins"/>
    <property type="match status" value="1"/>
</dbReference>
<dbReference type="PROSITE" id="PS00198">
    <property type="entry name" value="4FE4S_FER_1"/>
    <property type="match status" value="2"/>
</dbReference>
<dbReference type="PROSITE" id="PS51379">
    <property type="entry name" value="4FE4S_FER_2"/>
    <property type="match status" value="2"/>
</dbReference>
<organism>
    <name type="scientific">Angiopteris evecta</name>
    <name type="common">Mule's foot fern</name>
    <name type="synonym">Polypodium evectum</name>
    <dbReference type="NCBI Taxonomy" id="13825"/>
    <lineage>
        <taxon>Eukaryota</taxon>
        <taxon>Viridiplantae</taxon>
        <taxon>Streptophyta</taxon>
        <taxon>Embryophyta</taxon>
        <taxon>Tracheophyta</taxon>
        <taxon>Polypodiopsida</taxon>
        <taxon>Marattiidae</taxon>
        <taxon>Marattiales</taxon>
        <taxon>Marattiaceae</taxon>
        <taxon>Angiopteris</taxon>
    </lineage>
</organism>
<keyword id="KW-0004">4Fe-4S</keyword>
<keyword id="KW-0150">Chloroplast</keyword>
<keyword id="KW-0408">Iron</keyword>
<keyword id="KW-0411">Iron-sulfur</keyword>
<keyword id="KW-0472">Membrane</keyword>
<keyword id="KW-0479">Metal-binding</keyword>
<keyword id="KW-0520">NAD</keyword>
<keyword id="KW-0521">NADP</keyword>
<keyword id="KW-0934">Plastid</keyword>
<keyword id="KW-0618">Plastoquinone</keyword>
<keyword id="KW-0874">Quinone</keyword>
<keyword id="KW-0677">Repeat</keyword>
<keyword id="KW-0793">Thylakoid</keyword>
<keyword id="KW-1278">Translocase</keyword>
<geneLocation type="chloroplast"/>
<proteinExistence type="inferred from homology"/>
<gene>
    <name evidence="1" type="primary">ndhI</name>
</gene>
<sequence length="181" mass="20784">MFAMVNGLRSYSQQAIQAARYIGQGFVVTLDHMNRLPMTIQYPYEKLIPSERFRGRIHFEFDKCIACEVCVRVCPINLPVVDWELKESVRKKQLKNYSIDFAVCIFCGNCVEYCPTNCLSMTEEYELSTYDRHELNYDQIALGRLPVSVVQDPTTQTVSGLNYLSKGVMEGHPDSRSVTNF</sequence>
<name>NDHI_ANGEV</name>
<evidence type="ECO:0000255" key="1">
    <source>
        <dbReference type="HAMAP-Rule" id="MF_01351"/>
    </source>
</evidence>
<comment type="function">
    <text evidence="1">NDH shuttles electrons from NAD(P)H:plastoquinone, via FMN and iron-sulfur (Fe-S) centers, to quinones in the photosynthetic chain and possibly in a chloroplast respiratory chain. The immediate electron acceptor for the enzyme in this species is believed to be plastoquinone. Couples the redox reaction to proton translocation, and thus conserves the redox energy in a proton gradient.</text>
</comment>
<comment type="catalytic activity">
    <reaction evidence="1">
        <text>a plastoquinone + NADH + (n+1) H(+)(in) = a plastoquinol + NAD(+) + n H(+)(out)</text>
        <dbReference type="Rhea" id="RHEA:42608"/>
        <dbReference type="Rhea" id="RHEA-COMP:9561"/>
        <dbReference type="Rhea" id="RHEA-COMP:9562"/>
        <dbReference type="ChEBI" id="CHEBI:15378"/>
        <dbReference type="ChEBI" id="CHEBI:17757"/>
        <dbReference type="ChEBI" id="CHEBI:57540"/>
        <dbReference type="ChEBI" id="CHEBI:57945"/>
        <dbReference type="ChEBI" id="CHEBI:62192"/>
    </reaction>
</comment>
<comment type="catalytic activity">
    <reaction evidence="1">
        <text>a plastoquinone + NADPH + (n+1) H(+)(in) = a plastoquinol + NADP(+) + n H(+)(out)</text>
        <dbReference type="Rhea" id="RHEA:42612"/>
        <dbReference type="Rhea" id="RHEA-COMP:9561"/>
        <dbReference type="Rhea" id="RHEA-COMP:9562"/>
        <dbReference type="ChEBI" id="CHEBI:15378"/>
        <dbReference type="ChEBI" id="CHEBI:17757"/>
        <dbReference type="ChEBI" id="CHEBI:57783"/>
        <dbReference type="ChEBI" id="CHEBI:58349"/>
        <dbReference type="ChEBI" id="CHEBI:62192"/>
    </reaction>
</comment>
<comment type="cofactor">
    <cofactor evidence="1">
        <name>[4Fe-4S] cluster</name>
        <dbReference type="ChEBI" id="CHEBI:49883"/>
    </cofactor>
    <text evidence="1">Binds 2 [4Fe-4S] clusters per subunit.</text>
</comment>
<comment type="subunit">
    <text evidence="1">NDH is composed of at least 16 different subunits, 5 of which are encoded in the nucleus.</text>
</comment>
<comment type="subcellular location">
    <subcellularLocation>
        <location evidence="1">Plastid</location>
        <location evidence="1">Chloroplast thylakoid membrane</location>
        <topology evidence="1">Peripheral membrane protein</topology>
    </subcellularLocation>
</comment>
<comment type="similarity">
    <text evidence="1">Belongs to the complex I 23 kDa subunit family.</text>
</comment>